<comment type="function">
    <text evidence="1">Self-assembles to form an icosahedral capsid with a T=16 symmetry, about 200 nm in diameter, and consisting of 150 hexons and 12 pentons (total of 162 capsomers). Hexons form the edges and faces of the capsid and are each composed of six MCP molecules. In contrast, one penton is found at each of the 12 vertices. Eleven of the pentons are MCP pentamers, while the last vertex is occupied by the portal complex. The capsid is surrounded by a layer of proteinaceous material designated the tegument which, in turn, is enclosed in an envelope of host cell-derived lipids containing virus-encoded glycoproteins.</text>
</comment>
<comment type="subunit">
    <text evidence="1">Homomultimer. Makes the hexons and eleven out of twelve pentons. Interacts with triplex proteins 1/TRX1 and 2/TRX2; adjacent capsomers are linked together in groups of three by triplexes, heterotrimeric complexes composed of one molecule of TRX1 and two molecules of TRX2. Interacts with scaffold protein; this interaction allows efficient MCP transport to the host nucleus. Interacts with capsid vertex component 2/CVC2. Interacts with the small capsomere-interacting protein/SCP.</text>
</comment>
<comment type="subcellular location">
    <subcellularLocation>
        <location evidence="1">Virion</location>
    </subcellularLocation>
    <subcellularLocation>
        <location evidence="1">Host nucleus</location>
    </subcellularLocation>
</comment>
<comment type="similarity">
    <text evidence="1">Belongs to the herpesviridae major capsid protein family.</text>
</comment>
<name>MCP_HHV7J</name>
<accession>P52347</accession>
<protein>
    <recommendedName>
        <fullName evidence="1">Major capsid protein</fullName>
        <shortName evidence="1">MCP</shortName>
    </recommendedName>
</protein>
<keyword id="KW-0167">Capsid protein</keyword>
<keyword id="KW-1048">Host nucleus</keyword>
<keyword id="KW-1185">Reference proteome</keyword>
<keyword id="KW-1147">T=16 icosahedral capsid protein</keyword>
<keyword id="KW-0946">Virion</keyword>
<dbReference type="EMBL" id="U43400">
    <property type="protein sequence ID" value="AAC54720.1"/>
    <property type="molecule type" value="Genomic_DNA"/>
</dbReference>
<dbReference type="PIR" id="T41960">
    <property type="entry name" value="T41960"/>
</dbReference>
<dbReference type="RefSeq" id="YP_073799.1">
    <property type="nucleotide sequence ID" value="NC_001716.2"/>
</dbReference>
<dbReference type="SMR" id="P52347"/>
<dbReference type="GeneID" id="3289517"/>
<dbReference type="KEGG" id="vg:3289517"/>
<dbReference type="Proteomes" id="UP000009246">
    <property type="component" value="Segment"/>
</dbReference>
<dbReference type="GO" id="GO:0042025">
    <property type="term" value="C:host cell nucleus"/>
    <property type="evidence" value="ECO:0007669"/>
    <property type="project" value="UniProtKB-SubCell"/>
</dbReference>
<dbReference type="GO" id="GO:0039622">
    <property type="term" value="C:T=16 icosahedral viral capsid"/>
    <property type="evidence" value="ECO:0007669"/>
    <property type="project" value="UniProtKB-KW"/>
</dbReference>
<dbReference type="GO" id="GO:0005198">
    <property type="term" value="F:structural molecule activity"/>
    <property type="evidence" value="ECO:0007669"/>
    <property type="project" value="InterPro"/>
</dbReference>
<dbReference type="HAMAP" id="MF_04016">
    <property type="entry name" value="HSV_MCP"/>
    <property type="match status" value="1"/>
</dbReference>
<dbReference type="InterPro" id="IPR000912">
    <property type="entry name" value="Herpes_MCP"/>
</dbReference>
<dbReference type="InterPro" id="IPR023233">
    <property type="entry name" value="Herpes_MCP_upper_sf"/>
</dbReference>
<dbReference type="Pfam" id="PF03122">
    <property type="entry name" value="Herpes_MCP"/>
    <property type="match status" value="1"/>
</dbReference>
<dbReference type="PRINTS" id="PR00235">
    <property type="entry name" value="HSVCAPSIDMCP"/>
</dbReference>
<dbReference type="SUPFAM" id="SSF103417">
    <property type="entry name" value="Major capsid protein VP5"/>
    <property type="match status" value="1"/>
</dbReference>
<organismHost>
    <name type="scientific">Homo sapiens</name>
    <name type="common">Human</name>
    <dbReference type="NCBI Taxonomy" id="9606"/>
</organismHost>
<feature type="chain" id="PRO_0000115706" description="Major capsid protein">
    <location>
        <begin position="1"/>
        <end position="1345"/>
    </location>
</feature>
<organism>
    <name type="scientific">Human herpesvirus 7 (strain JI)</name>
    <name type="common">HHV-7</name>
    <name type="synonym">Human T lymphotropic virus</name>
    <dbReference type="NCBI Taxonomy" id="57278"/>
    <lineage>
        <taxon>Viruses</taxon>
        <taxon>Duplodnaviria</taxon>
        <taxon>Heunggongvirae</taxon>
        <taxon>Peploviricota</taxon>
        <taxon>Herviviricetes</taxon>
        <taxon>Herpesvirales</taxon>
        <taxon>Orthoherpesviridae</taxon>
        <taxon>Betaherpesvirinae</taxon>
        <taxon>Roseolovirus</taxon>
        <taxon>Roseolovirus humanbeta7</taxon>
        <taxon>Human betaherpesvirus 7</taxon>
    </lineage>
</organism>
<gene>
    <name evidence="1" type="primary">MCP</name>
    <name type="synonym">U57</name>
</gene>
<proteinExistence type="inferred from homology"/>
<sequence>MENWRTAEIFPKLDVSPNVFDDIRTQTAEQLFENLRLYYGDDSDRYNISFEALLGIYCNRTEWIDFFHTSIAVAANVIRFNDLDKMSLGKILFYIQLPRVATGNDVTAPKETTVLVTKYSEKHPINISFELSAACLAHLENTFKNTILDQMLNINAIHTVLRSLKNSADSLQRGLIYAFIKTILKKAPPQFILKTMLENKVNSKQILSKVQRSNMFQNFKNKLINSLFFLNRTSNVSFIYRYLCEMVDSTTESILNNTNSYVLKDGTPINGVLLGTPNTIQILSNALSQHISQMTMSVPVSYGTFVMGKENAVTAIAYQAIMADFSNYTKNVATETQDQNKKSEIFENQTQHADLKTNIIQLSDKTVVLDHLKKVYKNTNIEDPLEQKLELTFFFPMGLYISKDSGFSTMDSRLKLNDTMENNLPTSIYFYNKDKLLQRIDYSDLLPSLCHPIIFDCSVSERIFKNAAKPTGESFNQLCQVEFVREPPSTFLSNLYNLYEMKKEIPKTTNMLKNELTTEDFYKSENFTLKTELHPFFDFTYIQKNRSTDVLCSPRILLGNIPLPLAPSSFHEARTNQMIEQAKTNNLNYDYTLKLVVESLTNTAYPELAYIIELLIHGNKTAFQILKDVVSQCITYWYNIKHILLFCNNFEMIWLITTYLGDESIPGIAYTHYKNIISILKLVKRTISISNFNEQLCGEPLVGFVNALFDNRLFPPFLNSLPKNEANAIITAGNTPLTQNTVKLRNYEVSDLNRMNLLDSTEIFTDVDRPSFETIVLSKIFYFCFLPALTNNKMCGAGFDVKSFILDFFYTEPFILPDDNFCELPITNNVLIELITEAVGPSHALTDLSCIGKQLFKSILYLTENTKILEIESSLDPSQRHGSSSNFKSLQHVLYNGLCLVSPINVLKRYFKPIPFNRFFSDPIICGLMNIEVQTYLNIFPHYQRNDGGFPLPQALSHEFHNWQRTPFFVYASCCSNSLLSIMTLATMHCKLSPIAIILQSRQKIHPGFAATLVRTDCFDINCLLYSSKSATSIMIDDPTVSTEVKDISTTYNLTQHISFLDMGLGFSSSTAIANLKRVKTDMGSKVQDLFSVFPMHAYTNPTVNSWVRHHVGIEKPNPSETDALNILSFGKINKQSQSILLHGQQAICEVVITPVTSDINFYKTPKNPRGRASCMMGVDPHNESEARKSLYDHSRVDSDAFVATTNPWASQEGSLSDVLYNINHRDQLGYNPKSYSPNAVFFTDTEIFKTNKFMFKLISDYSIKTKTCLDSDTDIQYSCSEGTDDVTHRPCQFLQIAFPIHCSSNQALLESRSKNGMTQLSETHFANFAIGECIPLQNIIESLL</sequence>
<evidence type="ECO:0000255" key="1">
    <source>
        <dbReference type="HAMAP-Rule" id="MF_04016"/>
    </source>
</evidence>
<reference key="1">
    <citation type="journal article" date="1996" name="J. Virol.">
        <title>Determination and analysis of the complete nucleotide sequence of human herpesvirus.</title>
        <authorList>
            <person name="Nicholas J."/>
        </authorList>
    </citation>
    <scope>NUCLEOTIDE SEQUENCE [LARGE SCALE GENOMIC DNA]</scope>
</reference>